<feature type="peptide" id="PRO_0000043424" description="Adipokinetic hormone">
    <location>
        <begin position="1"/>
        <end position="8"/>
    </location>
</feature>
<feature type="modified residue" description="Pyrrolidone carboxylic acid" evidence="1">
    <location>
        <position position="1"/>
    </location>
</feature>
<feature type="modified residue" description="Tryptophan amide" evidence="1">
    <location>
        <position position="8"/>
    </location>
</feature>
<dbReference type="GO" id="GO:0005576">
    <property type="term" value="C:extracellular region"/>
    <property type="evidence" value="ECO:0007669"/>
    <property type="project" value="UniProtKB-SubCell"/>
</dbReference>
<dbReference type="GO" id="GO:0005179">
    <property type="term" value="F:hormone activity"/>
    <property type="evidence" value="ECO:0007669"/>
    <property type="project" value="UniProtKB-KW"/>
</dbReference>
<dbReference type="GO" id="GO:0007629">
    <property type="term" value="P:flight behavior"/>
    <property type="evidence" value="ECO:0007669"/>
    <property type="project" value="UniProtKB-KW"/>
</dbReference>
<dbReference type="GO" id="GO:0007218">
    <property type="term" value="P:neuropeptide signaling pathway"/>
    <property type="evidence" value="ECO:0007669"/>
    <property type="project" value="UniProtKB-KW"/>
</dbReference>
<dbReference type="InterPro" id="IPR002047">
    <property type="entry name" value="Adipokinetic_hormone_CS"/>
</dbReference>
<dbReference type="PROSITE" id="PS00256">
    <property type="entry name" value="AKH"/>
    <property type="match status" value="1"/>
</dbReference>
<comment type="function">
    <text>This hormone, released from cells in the corpora cardiaca, causes release of diglycerides from the fat body and stimulation of muscles to use these diglycerides as an energy source during energy-demanding processes.</text>
</comment>
<comment type="subcellular location">
    <subcellularLocation>
        <location>Secreted</location>
    </subcellularLocation>
</comment>
<comment type="similarity">
    <text evidence="2">Belongs to the AKH/HRTH/RPCH family.</text>
</comment>
<organism>
    <name type="scientific">Romalea microptera</name>
    <name type="common">Eastern lubber grasshopper</name>
    <name type="synonym">Romalea guttata</name>
    <dbReference type="NCBI Taxonomy" id="7007"/>
    <lineage>
        <taxon>Eukaryota</taxon>
        <taxon>Metazoa</taxon>
        <taxon>Ecdysozoa</taxon>
        <taxon>Arthropoda</taxon>
        <taxon>Hexapoda</taxon>
        <taxon>Insecta</taxon>
        <taxon>Pterygota</taxon>
        <taxon>Neoptera</taxon>
        <taxon>Polyneoptera</taxon>
        <taxon>Orthoptera</taxon>
        <taxon>Caelifera</taxon>
        <taxon>Acrididea</taxon>
        <taxon>Acridomorpha</taxon>
        <taxon>Acridoidea</taxon>
        <taxon>Romaleidae</taxon>
        <taxon>Romaleinae</taxon>
        <taxon>Romalea</taxon>
    </lineage>
</organism>
<evidence type="ECO:0000269" key="1">
    <source>
    </source>
</evidence>
<evidence type="ECO:0000305" key="2"/>
<sequence length="8" mass="938">QVNFSTGW</sequence>
<proteinExistence type="evidence at protein level"/>
<keyword id="KW-0027">Amidation</keyword>
<keyword id="KW-0903">Direct protein sequencing</keyword>
<keyword id="KW-0286">Flight</keyword>
<keyword id="KW-0372">Hormone</keyword>
<keyword id="KW-0527">Neuropeptide</keyword>
<keyword id="KW-0873">Pyrrolidone carboxylic acid</keyword>
<keyword id="KW-0964">Secreted</keyword>
<accession>P67786</accession>
<accession>P14086</accession>
<reference key="1">
    <citation type="journal article" date="1988" name="Peptides">
        <title>Sequence analyses of two neuropeptides of the AKH/RPCH-family from the lubber grasshopper, Romalea microptera.</title>
        <authorList>
            <person name="Gaede G."/>
            <person name="Hilbich C."/>
            <person name="Beyreuther K."/>
            <person name="Rinehart K.L. Jr."/>
        </authorList>
    </citation>
    <scope>PROTEIN SEQUENCE</scope>
    <scope>PYROGLUTAMATE FORMATION AT GLN-1</scope>
    <scope>AMIDATION AT TRP-8</scope>
    <source>
        <tissue>Corpora cardiaca</tissue>
    </source>
</reference>
<name>AKH_ROMMI</name>
<protein>
    <recommendedName>
        <fullName>Adipokinetic hormone</fullName>
        <shortName>AKH</shortName>
    </recommendedName>
    <alternativeName>
        <fullName>RO II</fullName>
    </alternativeName>
</protein>